<reference key="1">
    <citation type="journal article" date="2001" name="Proc. Natl. Acad. Sci. U.S.A.">
        <title>The complete genome of the crenarchaeon Sulfolobus solfataricus P2.</title>
        <authorList>
            <person name="She Q."/>
            <person name="Singh R.K."/>
            <person name="Confalonieri F."/>
            <person name="Zivanovic Y."/>
            <person name="Allard G."/>
            <person name="Awayez M.J."/>
            <person name="Chan-Weiher C.C.-Y."/>
            <person name="Clausen I.G."/>
            <person name="Curtis B.A."/>
            <person name="De Moors A."/>
            <person name="Erauso G."/>
            <person name="Fletcher C."/>
            <person name="Gordon P.M.K."/>
            <person name="Heikamp-de Jong I."/>
            <person name="Jeffries A.C."/>
            <person name="Kozera C.J."/>
            <person name="Medina N."/>
            <person name="Peng X."/>
            <person name="Thi-Ngoc H.P."/>
            <person name="Redder P."/>
            <person name="Schenk M.E."/>
            <person name="Theriault C."/>
            <person name="Tolstrup N."/>
            <person name="Charlebois R.L."/>
            <person name="Doolittle W.F."/>
            <person name="Duguet M."/>
            <person name="Gaasterland T."/>
            <person name="Garrett R.A."/>
            <person name="Ragan M.A."/>
            <person name="Sensen C.W."/>
            <person name="Van der Oost J."/>
        </authorList>
    </citation>
    <scope>NUCLEOTIDE SEQUENCE [LARGE SCALE GENOMIC DNA]</scope>
    <source>
        <strain>ATCC 35092 / DSM 1617 / JCM 11322 / P2</strain>
    </source>
</reference>
<sequence length="201" mass="22284">MVKEAGTKNRREKTKRIIIGISGASGTIYGIRTVQFLNELGYEIHIIISKSAEKVAQKELGINLINELKKYSSYIYNQSQIEASPSSSSFSITSKGMIIIPCSIKTLAEIANGIGSNLLSRTALNFIRTNKRLVLVIRETPLGAIELENALKLARLGVYIMPASPAFYILPKNIDDMINFIVGKALDLLGIKHDIYKRWKG</sequence>
<feature type="chain" id="PRO_0000134982" description="Flavin prenyltransferase UbiX">
    <location>
        <begin position="1"/>
        <end position="201"/>
    </location>
</feature>
<feature type="binding site" evidence="1">
    <location>
        <begin position="23"/>
        <end position="25"/>
    </location>
    <ligand>
        <name>FMN</name>
        <dbReference type="ChEBI" id="CHEBI:58210"/>
    </ligand>
</feature>
<feature type="binding site" evidence="1">
    <location>
        <position position="49"/>
    </location>
    <ligand>
        <name>FMN</name>
        <dbReference type="ChEBI" id="CHEBI:58210"/>
    </ligand>
</feature>
<feature type="binding site" evidence="1">
    <location>
        <begin position="103"/>
        <end position="106"/>
    </location>
    <ligand>
        <name>FMN</name>
        <dbReference type="ChEBI" id="CHEBI:58210"/>
    </ligand>
</feature>
<feature type="binding site" evidence="1">
    <location>
        <position position="138"/>
    </location>
    <ligand>
        <name>FMN</name>
        <dbReference type="ChEBI" id="CHEBI:58210"/>
    </ligand>
</feature>
<feature type="binding site" evidence="1">
    <location>
        <position position="168"/>
    </location>
    <ligand>
        <name>dimethylallyl phosphate</name>
        <dbReference type="ChEBI" id="CHEBI:88052"/>
    </ligand>
</feature>
<feature type="binding site" evidence="1">
    <location>
        <position position="184"/>
    </location>
    <ligand>
        <name>dimethylallyl phosphate</name>
        <dbReference type="ChEBI" id="CHEBI:88052"/>
    </ligand>
</feature>
<name>UBIX_SACS2</name>
<accession>Q9Y8K8</accession>
<comment type="function">
    <text evidence="1">Flavin prenyltransferase that catalyzes the synthesis of the prenylated FMN cofactor (prenyl-FMN) for 4-hydroxy-3-polyprenylbenzoic acid decarboxylase UbiD. The prenyltransferase is metal-independent and links a dimethylallyl moiety from dimethylallyl monophosphate (DMAP) to the flavin N5 and C6 atoms of FMN.</text>
</comment>
<comment type="catalytic activity">
    <reaction evidence="1">
        <text>dimethylallyl phosphate + FMNH2 = prenylated FMNH2 + phosphate</text>
        <dbReference type="Rhea" id="RHEA:37743"/>
        <dbReference type="ChEBI" id="CHEBI:43474"/>
        <dbReference type="ChEBI" id="CHEBI:57618"/>
        <dbReference type="ChEBI" id="CHEBI:87467"/>
        <dbReference type="ChEBI" id="CHEBI:88052"/>
        <dbReference type="EC" id="2.5.1.129"/>
    </reaction>
</comment>
<comment type="similarity">
    <text evidence="1">Belongs to the UbiX/PAD1 family.</text>
</comment>
<comment type="sequence caution" evidence="2">
    <conflict type="erroneous initiation">
        <sequence resource="EMBL-CDS" id="AAK40762"/>
    </conflict>
</comment>
<comment type="sequence caution" evidence="2">
    <conflict type="erroneous initiation">
        <sequence resource="EMBL-CDS" id="CAB46087"/>
    </conflict>
</comment>
<protein>
    <recommendedName>
        <fullName evidence="1">Flavin prenyltransferase UbiX</fullName>
        <ecNumber evidence="1">2.5.1.129</ecNumber>
    </recommendedName>
</protein>
<gene>
    <name evidence="1" type="primary">ubiX</name>
    <name type="ordered locus">SSO0437</name>
    <name type="ORF">C41_048</name>
</gene>
<dbReference type="EC" id="2.5.1.129" evidence="1"/>
<dbReference type="EMBL" id="AJ243426">
    <property type="protein sequence ID" value="CAB46087.1"/>
    <property type="status" value="ALT_INIT"/>
    <property type="molecule type" value="Genomic_DNA"/>
</dbReference>
<dbReference type="EMBL" id="AE006641">
    <property type="protein sequence ID" value="AAK40762.1"/>
    <property type="status" value="ALT_INIT"/>
    <property type="molecule type" value="Genomic_DNA"/>
</dbReference>
<dbReference type="PIR" id="C90188">
    <property type="entry name" value="C90188"/>
</dbReference>
<dbReference type="SMR" id="Q9Y8K8"/>
<dbReference type="FunCoup" id="Q9Y8K8">
    <property type="interactions" value="139"/>
</dbReference>
<dbReference type="STRING" id="273057.SSO0437"/>
<dbReference type="PaxDb" id="273057-SSO0437"/>
<dbReference type="EnsemblBacteria" id="AAK40762">
    <property type="protein sequence ID" value="AAK40762"/>
    <property type="gene ID" value="SSO0437"/>
</dbReference>
<dbReference type="KEGG" id="sso:SSO0437"/>
<dbReference type="PATRIC" id="fig|273057.12.peg.430"/>
<dbReference type="eggNOG" id="arCOG01703">
    <property type="taxonomic scope" value="Archaea"/>
</dbReference>
<dbReference type="HOGENOM" id="CLU_074522_0_1_2"/>
<dbReference type="InParanoid" id="Q9Y8K8"/>
<dbReference type="PhylomeDB" id="Q9Y8K8"/>
<dbReference type="Proteomes" id="UP000001974">
    <property type="component" value="Chromosome"/>
</dbReference>
<dbReference type="GO" id="GO:0016831">
    <property type="term" value="F:carboxy-lyase activity"/>
    <property type="evidence" value="ECO:0000318"/>
    <property type="project" value="GO_Central"/>
</dbReference>
<dbReference type="GO" id="GO:0106141">
    <property type="term" value="F:flavin prenyltransferase activity"/>
    <property type="evidence" value="ECO:0007669"/>
    <property type="project" value="UniProtKB-EC"/>
</dbReference>
<dbReference type="FunFam" id="3.40.50.1950:FF:000012">
    <property type="entry name" value="Flavin prenyltransferase UbiX"/>
    <property type="match status" value="1"/>
</dbReference>
<dbReference type="Gene3D" id="3.40.50.1950">
    <property type="entry name" value="Flavin prenyltransferase-like"/>
    <property type="match status" value="1"/>
</dbReference>
<dbReference type="HAMAP" id="MF_01984">
    <property type="entry name" value="ubiX_pad"/>
    <property type="match status" value="1"/>
</dbReference>
<dbReference type="InterPro" id="IPR036551">
    <property type="entry name" value="Flavin_trans-like"/>
</dbReference>
<dbReference type="InterPro" id="IPR003382">
    <property type="entry name" value="Flavoprotein"/>
</dbReference>
<dbReference type="InterPro" id="IPR004507">
    <property type="entry name" value="UbiX-like"/>
</dbReference>
<dbReference type="NCBIfam" id="NF004685">
    <property type="entry name" value="PRK06029.1"/>
    <property type="match status" value="1"/>
</dbReference>
<dbReference type="NCBIfam" id="TIGR00421">
    <property type="entry name" value="ubiX_pad"/>
    <property type="match status" value="1"/>
</dbReference>
<dbReference type="PANTHER" id="PTHR43374">
    <property type="entry name" value="FLAVIN PRENYLTRANSFERASE"/>
    <property type="match status" value="1"/>
</dbReference>
<dbReference type="PANTHER" id="PTHR43374:SF1">
    <property type="entry name" value="FLAVIN PRENYLTRANSFERASE PAD1, MITOCHONDRIAL"/>
    <property type="match status" value="1"/>
</dbReference>
<dbReference type="Pfam" id="PF02441">
    <property type="entry name" value="Flavoprotein"/>
    <property type="match status" value="1"/>
</dbReference>
<dbReference type="SUPFAM" id="SSF52507">
    <property type="entry name" value="Homo-oligomeric flavin-containing Cys decarboxylases, HFCD"/>
    <property type="match status" value="1"/>
</dbReference>
<organism>
    <name type="scientific">Saccharolobus solfataricus (strain ATCC 35092 / DSM 1617 / JCM 11322 / P2)</name>
    <name type="common">Sulfolobus solfataricus</name>
    <dbReference type="NCBI Taxonomy" id="273057"/>
    <lineage>
        <taxon>Archaea</taxon>
        <taxon>Thermoproteota</taxon>
        <taxon>Thermoprotei</taxon>
        <taxon>Sulfolobales</taxon>
        <taxon>Sulfolobaceae</taxon>
        <taxon>Saccharolobus</taxon>
    </lineage>
</organism>
<evidence type="ECO:0000255" key="1">
    <source>
        <dbReference type="HAMAP-Rule" id="MF_01984"/>
    </source>
</evidence>
<evidence type="ECO:0000305" key="2"/>
<keyword id="KW-0285">Flavoprotein</keyword>
<keyword id="KW-0288">FMN</keyword>
<keyword id="KW-0637">Prenyltransferase</keyword>
<keyword id="KW-1185">Reference proteome</keyword>
<keyword id="KW-0808">Transferase</keyword>
<proteinExistence type="inferred from homology"/>